<feature type="chain" id="PRO_0000438670" description="Chlorinase cctP2">
    <location>
        <begin position="1"/>
        <end position="314"/>
    </location>
</feature>
<feature type="region of interest" description="Disordered" evidence="2">
    <location>
        <begin position="1"/>
        <end position="24"/>
    </location>
</feature>
<feature type="short sequence motif" description="HXXHC 1" evidence="1">
    <location>
        <begin position="150"/>
        <end position="154"/>
    </location>
</feature>
<feature type="short sequence motif" description="HXXHC 2" evidence="1">
    <location>
        <begin position="177"/>
        <end position="181"/>
    </location>
</feature>
<feature type="compositionally biased region" description="Basic and acidic residues" evidence="2">
    <location>
        <begin position="1"/>
        <end position="14"/>
    </location>
</feature>
<evidence type="ECO:0000250" key="1">
    <source>
        <dbReference type="UniProtKB" id="B8NM67"/>
    </source>
</evidence>
<evidence type="ECO:0000256" key="2">
    <source>
        <dbReference type="SAM" id="MobiDB-lite"/>
    </source>
</evidence>
<evidence type="ECO:0000269" key="3">
    <source>
    </source>
</evidence>
<evidence type="ECO:0000303" key="4">
    <source>
    </source>
</evidence>
<evidence type="ECO:0000305" key="5"/>
<evidence type="ECO:0000305" key="6">
    <source>
    </source>
</evidence>
<organism>
    <name type="scientific">Talaromyces islandicus</name>
    <name type="common">Penicillium islandicum</name>
    <dbReference type="NCBI Taxonomy" id="28573"/>
    <lineage>
        <taxon>Eukaryota</taxon>
        <taxon>Fungi</taxon>
        <taxon>Dikarya</taxon>
        <taxon>Ascomycota</taxon>
        <taxon>Pezizomycotina</taxon>
        <taxon>Eurotiomycetes</taxon>
        <taxon>Eurotiomycetidae</taxon>
        <taxon>Eurotiales</taxon>
        <taxon>Trichocomaceae</taxon>
        <taxon>Talaromyces</taxon>
        <taxon>Talaromyces sect. Islandici</taxon>
    </lineage>
</organism>
<proteinExistence type="evidence at protein level"/>
<accession>P9WEN7</accession>
<accession>A0A0U1LSP0</accession>
<keyword id="KW-0868">Chloride</keyword>
<keyword id="KW-1185">Reference proteome</keyword>
<keyword id="KW-0808">Transferase</keyword>
<keyword id="KW-0843">Virulence</keyword>
<protein>
    <recommendedName>
        <fullName evidence="4">Chlorinase cctP2</fullName>
        <ecNumber evidence="3">2.5.1.-</ecNumber>
    </recommendedName>
    <alternativeName>
        <fullName evidence="4">Cyclochlorotine biosynthesis protein P2</fullName>
    </alternativeName>
</protein>
<sequence length="314" mass="35621">MEGKTSRYQDEAHDSAGSFNEETEGLMSGLHRSTKKRKLSSIVKLATPFLIVSFILNIVQLAYITVRRPECYSLYAKLKEHEITVPFRYATEYSDDEHTHEEKDALWNAIDISEGFVAISNDESDRLGLPRSKTFPWDANKGIYVSHGHHALHCTVLLHAYTYDAHQGKKPLVSYHHIEHCLDLLRQDIMCYANDVMDYTPDHGDNFLTGEGQQRKCRDWNKLSAWVKERSACYKTINITRAGEDHGVAHQLDRYTYCPPGSPYEPLIKAFKDLGRVNTGNLAADGFHELTPEELAAEAQAVAEHNKQILADEG</sequence>
<gene>
    <name evidence="4" type="primary">cctP2</name>
    <name type="ORF">PISL3812_02621_2</name>
</gene>
<reference key="1">
    <citation type="journal article" date="2015" name="J. Biotechnol.">
        <title>Draft genome sequence of Talaromyces islandicus ('Penicillium islandicum') WF-38-12, a neglected mold with significant biotechnological potential.</title>
        <authorList>
            <person name="Schafhauser T."/>
            <person name="Wibberg D."/>
            <person name="Rueckert C."/>
            <person name="Winkler A."/>
            <person name="Flor L."/>
            <person name="van Pee K.-H."/>
            <person name="Fewer D.P."/>
            <person name="Sivonen K."/>
            <person name="Jahn L."/>
            <person name="Ludwig-Mueller J."/>
            <person name="Caradec T."/>
            <person name="Jacques P."/>
            <person name="Huijbers M.M.E."/>
            <person name="van Berkel W.J.H."/>
            <person name="Weber T."/>
            <person name="Wohlleben W."/>
            <person name="Kalinowski J."/>
        </authorList>
    </citation>
    <scope>NUCLEOTIDE SEQUENCE [LARGE SCALE GENOMIC DNA]</scope>
    <source>
        <strain>ATCC 26535 / WF-38-12</strain>
    </source>
</reference>
<reference key="2">
    <citation type="journal article" date="2021" name="Org. Lett.">
        <title>Biosynthesis of cyclochlorotine: identification of the genes involved in oxidative transformations and intramolecular O,N-transacylation.</title>
        <authorList>
            <person name="Jiang Y."/>
            <person name="Ozaki T."/>
            <person name="Liu C."/>
            <person name="Igarashi Y."/>
            <person name="Ye Y."/>
            <person name="Tang S."/>
            <person name="Ye T."/>
            <person name="Maruyama J.I."/>
            <person name="Minami A."/>
            <person name="Oikawa H."/>
        </authorList>
    </citation>
    <scope>FUNCTION</scope>
    <scope>DISRUPTION PHENOTYPE</scope>
    <scope>CATALYTIC ACTIVITY</scope>
    <scope>PATHWAY</scope>
</reference>
<comment type="function">
    <text evidence="3 6">Chlorinase; part of the gene cluster that mediates the biosynthesis of the mycotoxin cyclochlorotine, a hepatotoxic and carcinogenic cyclic chlorinated pentapeptide (PubMed:33736433). Within the pathway, cctP2 catalyzes the formation of isocyclochlorotine via dichlorination of the Pro from the isocyclotine skeleton (PubMed:33736433). The NRPS cctN initially catalyzes the condensation of L-serine (Ser), Pro, L-2-aminobutyrate (2Abu), Ser, and beta-Phe in this order to produce isocyclotine. After the dichlorination of Pro2 catalyzed by cctP2 to produce isocyclochlorotine, the cctO-mediated transacylation of isocyclochlorotine can furnish cyclochlorotine. The subsequent hydroxylation of cyclochlorotine by cctR yields hydroxycyclochlorotine as the final product. CctP1 probably acts as a phenylalanine aminomutase and provides the uncommon building block beta-Phe. Furthermore, 2Abu can be synthesized from threonine by one of the threonine dehydratases and transaminases localized outside of the cluster. The functions of the remaining proteins encoded by the cluster, cctM and cctT, have not been identified yet (Probable) (PubMed:33736433).</text>
</comment>
<comment type="pathway">
    <text evidence="3">Mycotoxin biosynthesis.</text>
</comment>
<comment type="domain">
    <text evidence="1">The 2 HXXHC motifs are conserved in ustYa family proteins and might form active sites.</text>
</comment>
<comment type="disruption phenotype">
    <text evidence="3">Abolishes the production of chlorinated derivatives cyclochlorotine and hydroxycyclochlorotine and leads to the accumulatin of isocyclotine.</text>
</comment>
<comment type="similarity">
    <text evidence="5">Belongs to the ustYa family.</text>
</comment>
<comment type="sequence caution" evidence="3">
    <conflict type="erroneous gene model prediction">
        <sequence resource="EMBL-CDS" id="CRG85574"/>
    </conflict>
    <text>The predicted gene cctP/PISL3812_02621 has been split into 2 genes: cctP1 and cctP2.</text>
</comment>
<name>CCTP2_TALIS</name>
<dbReference type="EC" id="2.5.1.-" evidence="3"/>
<dbReference type="EMBL" id="CVMT01000002">
    <property type="protein sequence ID" value="CRG85574.1"/>
    <property type="status" value="ALT_SEQ"/>
    <property type="molecule type" value="Genomic_DNA"/>
</dbReference>
<dbReference type="OrthoDB" id="10051290at2759"/>
<dbReference type="Proteomes" id="UP000054383">
    <property type="component" value="Unassembled WGS sequence"/>
</dbReference>
<dbReference type="GO" id="GO:0016740">
    <property type="term" value="F:transferase activity"/>
    <property type="evidence" value="ECO:0007669"/>
    <property type="project" value="UniProtKB-KW"/>
</dbReference>
<dbReference type="GO" id="GO:0043386">
    <property type="term" value="P:mycotoxin biosynthetic process"/>
    <property type="evidence" value="ECO:0007669"/>
    <property type="project" value="InterPro"/>
</dbReference>
<dbReference type="InterPro" id="IPR021765">
    <property type="entry name" value="UstYa-like"/>
</dbReference>
<dbReference type="PANTHER" id="PTHR33365:SF6">
    <property type="entry name" value="OXIDASE USTYA"/>
    <property type="match status" value="1"/>
</dbReference>
<dbReference type="PANTHER" id="PTHR33365">
    <property type="entry name" value="YALI0B05434P"/>
    <property type="match status" value="1"/>
</dbReference>
<dbReference type="Pfam" id="PF11807">
    <property type="entry name" value="UstYa"/>
    <property type="match status" value="1"/>
</dbReference>